<comment type="function">
    <text evidence="1">Component of the SOS system and an inhibitor of cell division. Accumulation of SulA causes rapid cessation of cell division and the appearance of long, non-septate filaments. In the presence of GTP, binds a polymerization-competent form of FtsZ in a 1:1 ratio, thus inhibiting FtsZ polymerization and therefore preventing it from participating in the assembly of the Z ring. This mechanism prevents the premature segregation of damaged DNA to daughter cells during cell division.</text>
</comment>
<comment type="subunit">
    <text evidence="1">Interacts with FtsZ.</text>
</comment>
<comment type="induction">
    <text evidence="1">By DNA damage, as part of the SOS response.</text>
</comment>
<comment type="PTM">
    <text evidence="1">Is rapidly cleaved and degraded by the Lon protease once DNA damage is repaired.</text>
</comment>
<comment type="similarity">
    <text evidence="1">Belongs to the SulA family.</text>
</comment>
<accession>B5FR01</accession>
<proteinExistence type="inferred from homology"/>
<sequence>MYTSGYANRSSSFPTTTHNAARTATENAAAGLVSEVVYHEDQPMMAQLLLLPLLRQLGQQSRWQLWLTPQQKLSREWVQSSGLPLTKVMQISQLAPRHTLESMIRALRTGNYSVVIGWMTEELTEEEHASLVEAAKVGNAVGFIMRPVRAHALSRRQHSGLKIHSNLYH</sequence>
<keyword id="KW-0131">Cell cycle</keyword>
<keyword id="KW-0132">Cell division</keyword>
<keyword id="KW-0227">DNA damage</keyword>
<keyword id="KW-0717">Septation</keyword>
<keyword id="KW-0742">SOS response</keyword>
<name>SULA_SALDC</name>
<protein>
    <recommendedName>
        <fullName evidence="1">Cell division inhibitor SulA</fullName>
    </recommendedName>
</protein>
<gene>
    <name evidence="1" type="primary">sulA</name>
    <name type="ordered locus">SeD_A1146</name>
</gene>
<evidence type="ECO:0000255" key="1">
    <source>
        <dbReference type="HAMAP-Rule" id="MF_01179"/>
    </source>
</evidence>
<feature type="chain" id="PRO_1000138165" description="Cell division inhibitor SulA">
    <location>
        <begin position="1"/>
        <end position="169"/>
    </location>
</feature>
<feature type="region of interest" description="FtsZ binding" evidence="1">
    <location>
        <begin position="106"/>
        <end position="112"/>
    </location>
</feature>
<feature type="region of interest" description="Lon protease binding" evidence="1">
    <location>
        <begin position="162"/>
        <end position="169"/>
    </location>
</feature>
<feature type="site" description="Essential for degradation by Lon protease" evidence="1">
    <location>
        <position position="169"/>
    </location>
</feature>
<reference key="1">
    <citation type="journal article" date="2011" name="J. Bacteriol.">
        <title>Comparative genomics of 28 Salmonella enterica isolates: evidence for CRISPR-mediated adaptive sublineage evolution.</title>
        <authorList>
            <person name="Fricke W.F."/>
            <person name="Mammel M.K."/>
            <person name="McDermott P.F."/>
            <person name="Tartera C."/>
            <person name="White D.G."/>
            <person name="Leclerc J.E."/>
            <person name="Ravel J."/>
            <person name="Cebula T.A."/>
        </authorList>
    </citation>
    <scope>NUCLEOTIDE SEQUENCE [LARGE SCALE GENOMIC DNA]</scope>
    <source>
        <strain>CT_02021853</strain>
    </source>
</reference>
<dbReference type="EMBL" id="CP001144">
    <property type="protein sequence ID" value="ACH76411.1"/>
    <property type="molecule type" value="Genomic_DNA"/>
</dbReference>
<dbReference type="RefSeq" id="WP_000288733.1">
    <property type="nucleotide sequence ID" value="NC_011205.1"/>
</dbReference>
<dbReference type="SMR" id="B5FR01"/>
<dbReference type="KEGG" id="sed:SeD_A1146"/>
<dbReference type="HOGENOM" id="CLU_118972_1_0_6"/>
<dbReference type="Proteomes" id="UP000008322">
    <property type="component" value="Chromosome"/>
</dbReference>
<dbReference type="GO" id="GO:0000917">
    <property type="term" value="P:division septum assembly"/>
    <property type="evidence" value="ECO:0007669"/>
    <property type="project" value="UniProtKB-KW"/>
</dbReference>
<dbReference type="GO" id="GO:0006281">
    <property type="term" value="P:DNA repair"/>
    <property type="evidence" value="ECO:0007669"/>
    <property type="project" value="TreeGrafter"/>
</dbReference>
<dbReference type="GO" id="GO:0051782">
    <property type="term" value="P:negative regulation of cell division"/>
    <property type="evidence" value="ECO:0007669"/>
    <property type="project" value="UniProtKB-UniRule"/>
</dbReference>
<dbReference type="GO" id="GO:0009432">
    <property type="term" value="P:SOS response"/>
    <property type="evidence" value="ECO:0007669"/>
    <property type="project" value="UniProtKB-UniRule"/>
</dbReference>
<dbReference type="FunFam" id="3.40.50.300:FF:000417">
    <property type="entry name" value="Cell division inhibitor SulA"/>
    <property type="match status" value="1"/>
</dbReference>
<dbReference type="Gene3D" id="3.40.50.300">
    <property type="entry name" value="P-loop containing nucleotide triphosphate hydrolases"/>
    <property type="match status" value="1"/>
</dbReference>
<dbReference type="HAMAP" id="MF_01179">
    <property type="entry name" value="SulA"/>
    <property type="match status" value="1"/>
</dbReference>
<dbReference type="InterPro" id="IPR004596">
    <property type="entry name" value="Cell_div_suppressor_SulA"/>
</dbReference>
<dbReference type="InterPro" id="IPR027417">
    <property type="entry name" value="P-loop_NTPase"/>
</dbReference>
<dbReference type="InterPro" id="IPR050356">
    <property type="entry name" value="SulA_CellDiv_inhibitor"/>
</dbReference>
<dbReference type="InterPro" id="IPR047696">
    <property type="entry name" value="SulA_enterobact"/>
</dbReference>
<dbReference type="NCBIfam" id="NF007892">
    <property type="entry name" value="PRK10595.1"/>
    <property type="match status" value="1"/>
</dbReference>
<dbReference type="NCBIfam" id="TIGR00623">
    <property type="entry name" value="SOS_SulA_coli"/>
    <property type="match status" value="1"/>
</dbReference>
<dbReference type="PANTHER" id="PTHR35369">
    <property type="entry name" value="BLR3025 PROTEIN-RELATED"/>
    <property type="match status" value="1"/>
</dbReference>
<dbReference type="PANTHER" id="PTHR35369:SF4">
    <property type="entry name" value="CELL DIVISION INHIBITOR SULA"/>
    <property type="match status" value="1"/>
</dbReference>
<dbReference type="Pfam" id="PF03846">
    <property type="entry name" value="SulA"/>
    <property type="match status" value="1"/>
</dbReference>
<dbReference type="PIRSF" id="PIRSF003093">
    <property type="entry name" value="SulA"/>
    <property type="match status" value="1"/>
</dbReference>
<dbReference type="SUPFAM" id="SSF52540">
    <property type="entry name" value="P-loop containing nucleoside triphosphate hydrolases"/>
    <property type="match status" value="1"/>
</dbReference>
<organism>
    <name type="scientific">Salmonella dublin (strain CT_02021853)</name>
    <dbReference type="NCBI Taxonomy" id="439851"/>
    <lineage>
        <taxon>Bacteria</taxon>
        <taxon>Pseudomonadati</taxon>
        <taxon>Pseudomonadota</taxon>
        <taxon>Gammaproteobacteria</taxon>
        <taxon>Enterobacterales</taxon>
        <taxon>Enterobacteriaceae</taxon>
        <taxon>Salmonella</taxon>
    </lineage>
</organism>